<proteinExistence type="evidence at protein level"/>
<evidence type="ECO:0000255" key="1"/>
<reference key="1">
    <citation type="journal article" date="1993" name="Genomics">
        <title>DNA sequence and analysis of 136 kilobases of the Escherichia coli genome: organizational symmetry around the origin of replication.</title>
        <authorList>
            <person name="Burland V.D."/>
            <person name="Plunkett G. III"/>
            <person name="Daniels D.L."/>
            <person name="Blattner F.R."/>
        </authorList>
    </citation>
    <scope>NUCLEOTIDE SEQUENCE [LARGE SCALE GENOMIC DNA]</scope>
    <source>
        <strain>K12 / MG1655 / ATCC 47076</strain>
    </source>
</reference>
<reference key="2">
    <citation type="journal article" date="1997" name="Science">
        <title>The complete genome sequence of Escherichia coli K-12.</title>
        <authorList>
            <person name="Blattner F.R."/>
            <person name="Plunkett G. III"/>
            <person name="Bloch C.A."/>
            <person name="Perna N.T."/>
            <person name="Burland V."/>
            <person name="Riley M."/>
            <person name="Collado-Vides J."/>
            <person name="Glasner J.D."/>
            <person name="Rode C.K."/>
            <person name="Mayhew G.F."/>
            <person name="Gregor J."/>
            <person name="Davis N.W."/>
            <person name="Kirkpatrick H.A."/>
            <person name="Goeden M.A."/>
            <person name="Rose D.J."/>
            <person name="Mau B."/>
            <person name="Shao Y."/>
        </authorList>
    </citation>
    <scope>NUCLEOTIDE SEQUENCE [LARGE SCALE GENOMIC DNA]</scope>
    <source>
        <strain>K12 / MG1655 / ATCC 47076</strain>
    </source>
</reference>
<reference key="3">
    <citation type="journal article" date="2006" name="Mol. Syst. Biol.">
        <title>Highly accurate genome sequences of Escherichia coli K-12 strains MG1655 and W3110.</title>
        <authorList>
            <person name="Hayashi K."/>
            <person name="Morooka N."/>
            <person name="Yamamoto Y."/>
            <person name="Fujita K."/>
            <person name="Isono K."/>
            <person name="Choi S."/>
            <person name="Ohtsubo E."/>
            <person name="Baba T."/>
            <person name="Wanner B.L."/>
            <person name="Mori H."/>
            <person name="Horiuchi T."/>
        </authorList>
    </citation>
    <scope>NUCLEOTIDE SEQUENCE [LARGE SCALE GENOMIC DNA]</scope>
    <source>
        <strain>K12 / W3110 / ATCC 27325 / DSM 5911</strain>
    </source>
</reference>
<reference key="4">
    <citation type="journal article" date="2005" name="Science">
        <title>Global topology analysis of the Escherichia coli inner membrane proteome.</title>
        <authorList>
            <person name="Daley D.O."/>
            <person name="Rapp M."/>
            <person name="Granseth E."/>
            <person name="Melen K."/>
            <person name="Drew D."/>
            <person name="von Heijne G."/>
        </authorList>
    </citation>
    <scope>TOPOLOGY [LARGE SCALE ANALYSIS]</scope>
    <source>
        <strain>K12 / MG1655 / ATCC 47076</strain>
    </source>
</reference>
<protein>
    <recommendedName>
        <fullName>Inner membrane protein YidG</fullName>
    </recommendedName>
</protein>
<gene>
    <name type="primary">yidG</name>
    <name type="ordered locus">b3675</name>
    <name type="ordered locus">JW3651</name>
</gene>
<name>YIDG_ECOLI</name>
<sequence>MPDSRKARRIADPGLQPERTSLAWFRTMLGYGALMALAIKHNWHQAGMLFWISIGILAIVALILWHYTRNRNLMDVTNSDFSQFHVVRDKFLISLAVLSLAILFAVTHIHQLIVFIERVA</sequence>
<comment type="subcellular location">
    <subcellularLocation>
        <location>Cell inner membrane</location>
        <topology>Multi-pass membrane protein</topology>
    </subcellularLocation>
</comment>
<keyword id="KW-0997">Cell inner membrane</keyword>
<keyword id="KW-1003">Cell membrane</keyword>
<keyword id="KW-0472">Membrane</keyword>
<keyword id="KW-1185">Reference proteome</keyword>
<keyword id="KW-0812">Transmembrane</keyword>
<keyword id="KW-1133">Transmembrane helix</keyword>
<feature type="chain" id="PRO_0000169624" description="Inner membrane protein YidG">
    <location>
        <begin position="1"/>
        <end position="120"/>
    </location>
</feature>
<feature type="topological domain" description="Cytoplasmic" evidence="1">
    <location>
        <begin position="1"/>
        <end position="21"/>
    </location>
</feature>
<feature type="transmembrane region" description="Helical" evidence="1">
    <location>
        <begin position="22"/>
        <end position="39"/>
    </location>
</feature>
<feature type="topological domain" description="Periplasmic" evidence="1">
    <location>
        <begin position="40"/>
        <end position="48"/>
    </location>
</feature>
<feature type="transmembrane region" description="Helical" evidence="1">
    <location>
        <begin position="49"/>
        <end position="68"/>
    </location>
</feature>
<feature type="topological domain" description="Cytoplasmic" evidence="1">
    <location>
        <begin position="69"/>
        <end position="90"/>
    </location>
</feature>
<feature type="transmembrane region" description="Helical" evidence="1">
    <location>
        <begin position="91"/>
        <end position="113"/>
    </location>
</feature>
<feature type="topological domain" description="Periplasmic" evidence="1">
    <location>
        <begin position="114"/>
        <end position="120"/>
    </location>
</feature>
<accession>P0ADL6</accession>
<accession>P31444</accession>
<accession>Q2M7Y8</accession>
<dbReference type="EMBL" id="L10328">
    <property type="protein sequence ID" value="AAA62027.1"/>
    <property type="molecule type" value="Genomic_DNA"/>
</dbReference>
<dbReference type="EMBL" id="U00096">
    <property type="protein sequence ID" value="AAC76698.1"/>
    <property type="molecule type" value="Genomic_DNA"/>
</dbReference>
<dbReference type="EMBL" id="AP009048">
    <property type="protein sequence ID" value="BAE77618.1"/>
    <property type="molecule type" value="Genomic_DNA"/>
</dbReference>
<dbReference type="PIR" id="D65169">
    <property type="entry name" value="D65169"/>
</dbReference>
<dbReference type="RefSeq" id="NP_418131.1">
    <property type="nucleotide sequence ID" value="NC_000913.3"/>
</dbReference>
<dbReference type="RefSeq" id="WP_001113432.1">
    <property type="nucleotide sequence ID" value="NZ_STEB01000015.1"/>
</dbReference>
<dbReference type="BioGRID" id="4261241">
    <property type="interactions" value="11"/>
</dbReference>
<dbReference type="FunCoup" id="P0ADL6">
    <property type="interactions" value="4"/>
</dbReference>
<dbReference type="STRING" id="511145.b3675"/>
<dbReference type="PaxDb" id="511145-b3675"/>
<dbReference type="EnsemblBacteria" id="AAC76698">
    <property type="protein sequence ID" value="AAC76698"/>
    <property type="gene ID" value="b3675"/>
</dbReference>
<dbReference type="GeneID" id="948191"/>
<dbReference type="KEGG" id="ecj:JW3651"/>
<dbReference type="KEGG" id="eco:b3675"/>
<dbReference type="KEGG" id="ecoc:C3026_19930"/>
<dbReference type="PATRIC" id="fig|1411691.4.peg.3029"/>
<dbReference type="EchoBASE" id="EB1646"/>
<dbReference type="eggNOG" id="ENOG5031J0W">
    <property type="taxonomic scope" value="Bacteria"/>
</dbReference>
<dbReference type="HOGENOM" id="CLU_150487_2_0_6"/>
<dbReference type="InParanoid" id="P0ADL6"/>
<dbReference type="OMA" id="ILWRYTR"/>
<dbReference type="OrthoDB" id="3701077at2"/>
<dbReference type="PhylomeDB" id="P0ADL6"/>
<dbReference type="BioCyc" id="EcoCyc:EG11695-MONOMER"/>
<dbReference type="PRO" id="PR:P0ADL6"/>
<dbReference type="Proteomes" id="UP000000625">
    <property type="component" value="Chromosome"/>
</dbReference>
<dbReference type="GO" id="GO:0005886">
    <property type="term" value="C:plasma membrane"/>
    <property type="evidence" value="ECO:0000314"/>
    <property type="project" value="EcoCyc"/>
</dbReference>
<dbReference type="InterPro" id="IPR003807">
    <property type="entry name" value="DUF202"/>
</dbReference>
<dbReference type="Pfam" id="PF02656">
    <property type="entry name" value="DUF202"/>
    <property type="match status" value="1"/>
</dbReference>
<organism>
    <name type="scientific">Escherichia coli (strain K12)</name>
    <dbReference type="NCBI Taxonomy" id="83333"/>
    <lineage>
        <taxon>Bacteria</taxon>
        <taxon>Pseudomonadati</taxon>
        <taxon>Pseudomonadota</taxon>
        <taxon>Gammaproteobacteria</taxon>
        <taxon>Enterobacterales</taxon>
        <taxon>Enterobacteriaceae</taxon>
        <taxon>Escherichia</taxon>
    </lineage>
</organism>